<accession>Q8Y8C0</accession>
<reference key="1">
    <citation type="journal article" date="2001" name="Science">
        <title>Comparative genomics of Listeria species.</title>
        <authorList>
            <person name="Glaser P."/>
            <person name="Frangeul L."/>
            <person name="Buchrieser C."/>
            <person name="Rusniok C."/>
            <person name="Amend A."/>
            <person name="Baquero F."/>
            <person name="Berche P."/>
            <person name="Bloecker H."/>
            <person name="Brandt P."/>
            <person name="Chakraborty T."/>
            <person name="Charbit A."/>
            <person name="Chetouani F."/>
            <person name="Couve E."/>
            <person name="de Daruvar A."/>
            <person name="Dehoux P."/>
            <person name="Domann E."/>
            <person name="Dominguez-Bernal G."/>
            <person name="Duchaud E."/>
            <person name="Durant L."/>
            <person name="Dussurget O."/>
            <person name="Entian K.-D."/>
            <person name="Fsihi H."/>
            <person name="Garcia-del Portillo F."/>
            <person name="Garrido P."/>
            <person name="Gautier L."/>
            <person name="Goebel W."/>
            <person name="Gomez-Lopez N."/>
            <person name="Hain T."/>
            <person name="Hauf J."/>
            <person name="Jackson D."/>
            <person name="Jones L.-M."/>
            <person name="Kaerst U."/>
            <person name="Kreft J."/>
            <person name="Kuhn M."/>
            <person name="Kunst F."/>
            <person name="Kurapkat G."/>
            <person name="Madueno E."/>
            <person name="Maitournam A."/>
            <person name="Mata Vicente J."/>
            <person name="Ng E."/>
            <person name="Nedjari H."/>
            <person name="Nordsiek G."/>
            <person name="Novella S."/>
            <person name="de Pablos B."/>
            <person name="Perez-Diaz J.-C."/>
            <person name="Purcell R."/>
            <person name="Remmel B."/>
            <person name="Rose M."/>
            <person name="Schlueter T."/>
            <person name="Simoes N."/>
            <person name="Tierrez A."/>
            <person name="Vazquez-Boland J.-A."/>
            <person name="Voss H."/>
            <person name="Wehland J."/>
            <person name="Cossart P."/>
        </authorList>
    </citation>
    <scope>NUCLEOTIDE SEQUENCE [LARGE SCALE GENOMIC DNA]</scope>
    <source>
        <strain>ATCC BAA-679 / EGD-e</strain>
    </source>
</reference>
<proteinExistence type="inferred from homology"/>
<sequence>MSQDLQKEVASRKTFAIISHPDAGKTTITEQLLLFGGVIRSAGTVKGKKSGKFATSDWMEIEKQRGISVTSSVMQFDYNGSRINILDTPGHSDFSEDTYRTLMAVDSAVMVIDAAKGIEAQTLKLFKVCRMRGIPIFTFINKMDRQGKMPLELLAELEEVLGIESYPMNWPIGMGKELAGLYDRYHRVIEQYRSEEDERFLPLGEDGDLKEAHAIQKSLYYDQALEEIMLLDEAGNDFSRERIIAGEQTPVFFGSALTNFGVETFLRTFVDFAPAPSSHESNEGVIEADNPKFSGFIFKIQANMNPAHRDRIAFIRICSGEFERGMNVTLTRTGKSLKLANSTQFMADDRETVNRAVAGDIIGLYDTGNYQIGDTITNGSKKLEFEKLPQFTPELFMRVYAKNVMKQKHFHKGVEQLVQEGAIQLFKTWRTEEYIIGAVGQLQFEVFEHRMRGEYNSEIRMEPIGKKIARWVKEEDADEKLSTARSMLVKDRFDQPLFLFENEFAINWFNDKNPDIELTSLL</sequence>
<keyword id="KW-0963">Cytoplasm</keyword>
<keyword id="KW-0342">GTP-binding</keyword>
<keyword id="KW-0547">Nucleotide-binding</keyword>
<keyword id="KW-0648">Protein biosynthesis</keyword>
<keyword id="KW-1185">Reference proteome</keyword>
<evidence type="ECO:0000255" key="1">
    <source>
        <dbReference type="HAMAP-Rule" id="MF_00072"/>
    </source>
</evidence>
<name>RF3_LISMO</name>
<gene>
    <name evidence="1" type="primary">prfC</name>
    <name type="ordered locus">lmo0988</name>
</gene>
<organism>
    <name type="scientific">Listeria monocytogenes serovar 1/2a (strain ATCC BAA-679 / EGD-e)</name>
    <dbReference type="NCBI Taxonomy" id="169963"/>
    <lineage>
        <taxon>Bacteria</taxon>
        <taxon>Bacillati</taxon>
        <taxon>Bacillota</taxon>
        <taxon>Bacilli</taxon>
        <taxon>Bacillales</taxon>
        <taxon>Listeriaceae</taxon>
        <taxon>Listeria</taxon>
    </lineage>
</organism>
<comment type="function">
    <text evidence="1">Increases the formation of ribosomal termination complexes and stimulates activities of RF-1 and RF-2. It binds guanine nucleotides and has strong preference for UGA stop codons. It may interact directly with the ribosome. The stimulation of RF-1 and RF-2 is significantly reduced by GTP and GDP, but not by GMP.</text>
</comment>
<comment type="subcellular location">
    <subcellularLocation>
        <location evidence="1">Cytoplasm</location>
    </subcellularLocation>
</comment>
<comment type="similarity">
    <text evidence="1">Belongs to the TRAFAC class translation factor GTPase superfamily. Classic translation factor GTPase family. PrfC subfamily.</text>
</comment>
<feature type="chain" id="PRO_0000210949" description="Peptide chain release factor 3">
    <location>
        <begin position="1"/>
        <end position="522"/>
    </location>
</feature>
<feature type="domain" description="tr-type G">
    <location>
        <begin position="10"/>
        <end position="277"/>
    </location>
</feature>
<feature type="binding site" evidence="1">
    <location>
        <begin position="19"/>
        <end position="26"/>
    </location>
    <ligand>
        <name>GTP</name>
        <dbReference type="ChEBI" id="CHEBI:37565"/>
    </ligand>
</feature>
<feature type="binding site" evidence="1">
    <location>
        <begin position="87"/>
        <end position="91"/>
    </location>
    <ligand>
        <name>GTP</name>
        <dbReference type="ChEBI" id="CHEBI:37565"/>
    </ligand>
</feature>
<feature type="binding site" evidence="1">
    <location>
        <begin position="141"/>
        <end position="144"/>
    </location>
    <ligand>
        <name>GTP</name>
        <dbReference type="ChEBI" id="CHEBI:37565"/>
    </ligand>
</feature>
<dbReference type="EMBL" id="AL591977">
    <property type="protein sequence ID" value="CAC99066.1"/>
    <property type="molecule type" value="Genomic_DNA"/>
</dbReference>
<dbReference type="PIR" id="AD1198">
    <property type="entry name" value="AD1198"/>
</dbReference>
<dbReference type="RefSeq" id="NP_464513.1">
    <property type="nucleotide sequence ID" value="NC_003210.1"/>
</dbReference>
<dbReference type="RefSeq" id="WP_003722853.1">
    <property type="nucleotide sequence ID" value="NZ_CP149495.1"/>
</dbReference>
<dbReference type="SMR" id="Q8Y8C0"/>
<dbReference type="STRING" id="169963.gene:17593644"/>
<dbReference type="PaxDb" id="169963-lmo0988"/>
<dbReference type="EnsemblBacteria" id="CAC99066">
    <property type="protein sequence ID" value="CAC99066"/>
    <property type="gene ID" value="CAC99066"/>
</dbReference>
<dbReference type="GeneID" id="986429"/>
<dbReference type="KEGG" id="lmo:lmo0988"/>
<dbReference type="PATRIC" id="fig|169963.11.peg.1016"/>
<dbReference type="eggNOG" id="COG4108">
    <property type="taxonomic scope" value="Bacteria"/>
</dbReference>
<dbReference type="HOGENOM" id="CLU_002794_2_1_9"/>
<dbReference type="OrthoDB" id="9804431at2"/>
<dbReference type="PhylomeDB" id="Q8Y8C0"/>
<dbReference type="BioCyc" id="LMON169963:LMO0988-MONOMER"/>
<dbReference type="Proteomes" id="UP000000817">
    <property type="component" value="Chromosome"/>
</dbReference>
<dbReference type="GO" id="GO:0005829">
    <property type="term" value="C:cytosol"/>
    <property type="evidence" value="ECO:0000318"/>
    <property type="project" value="GO_Central"/>
</dbReference>
<dbReference type="GO" id="GO:0005525">
    <property type="term" value="F:GTP binding"/>
    <property type="evidence" value="ECO:0007669"/>
    <property type="project" value="UniProtKB-UniRule"/>
</dbReference>
<dbReference type="GO" id="GO:0003924">
    <property type="term" value="F:GTPase activity"/>
    <property type="evidence" value="ECO:0007669"/>
    <property type="project" value="InterPro"/>
</dbReference>
<dbReference type="GO" id="GO:0016150">
    <property type="term" value="F:translation release factor activity, codon nonspecific"/>
    <property type="evidence" value="ECO:0000318"/>
    <property type="project" value="GO_Central"/>
</dbReference>
<dbReference type="GO" id="GO:0016149">
    <property type="term" value="F:translation release factor activity, codon specific"/>
    <property type="evidence" value="ECO:0007669"/>
    <property type="project" value="UniProtKB-UniRule"/>
</dbReference>
<dbReference type="GO" id="GO:0006449">
    <property type="term" value="P:regulation of translational termination"/>
    <property type="evidence" value="ECO:0007669"/>
    <property type="project" value="UniProtKB-UniRule"/>
</dbReference>
<dbReference type="GO" id="GO:0006415">
    <property type="term" value="P:translational termination"/>
    <property type="evidence" value="ECO:0000318"/>
    <property type="project" value="GO_Central"/>
</dbReference>
<dbReference type="CDD" id="cd04169">
    <property type="entry name" value="RF3"/>
    <property type="match status" value="1"/>
</dbReference>
<dbReference type="CDD" id="cd03689">
    <property type="entry name" value="RF3_II"/>
    <property type="match status" value="1"/>
</dbReference>
<dbReference type="CDD" id="cd16259">
    <property type="entry name" value="RF3_III"/>
    <property type="match status" value="1"/>
</dbReference>
<dbReference type="FunFam" id="2.40.30.10:FF:000040">
    <property type="entry name" value="Peptide chain release factor 3"/>
    <property type="match status" value="1"/>
</dbReference>
<dbReference type="FunFam" id="3.30.70.3280:FF:000001">
    <property type="entry name" value="Peptide chain release factor 3"/>
    <property type="match status" value="1"/>
</dbReference>
<dbReference type="FunFam" id="3.40.50.300:FF:000542">
    <property type="entry name" value="Peptide chain release factor 3"/>
    <property type="match status" value="1"/>
</dbReference>
<dbReference type="Gene3D" id="3.40.50.300">
    <property type="entry name" value="P-loop containing nucleotide triphosphate hydrolases"/>
    <property type="match status" value="1"/>
</dbReference>
<dbReference type="Gene3D" id="3.30.70.3280">
    <property type="entry name" value="Peptide chain release factor 3, domain III"/>
    <property type="match status" value="1"/>
</dbReference>
<dbReference type="Gene3D" id="2.40.30.10">
    <property type="entry name" value="Translation factors"/>
    <property type="match status" value="1"/>
</dbReference>
<dbReference type="HAMAP" id="MF_00072">
    <property type="entry name" value="Rel_fac_3"/>
    <property type="match status" value="1"/>
</dbReference>
<dbReference type="InterPro" id="IPR053905">
    <property type="entry name" value="EF-G-like_DII"/>
</dbReference>
<dbReference type="InterPro" id="IPR035647">
    <property type="entry name" value="EFG_III/V"/>
</dbReference>
<dbReference type="InterPro" id="IPR031157">
    <property type="entry name" value="G_TR_CS"/>
</dbReference>
<dbReference type="InterPro" id="IPR027417">
    <property type="entry name" value="P-loop_NTPase"/>
</dbReference>
<dbReference type="InterPro" id="IPR004548">
    <property type="entry name" value="PrfC"/>
</dbReference>
<dbReference type="InterPro" id="IPR032090">
    <property type="entry name" value="RF3_C"/>
</dbReference>
<dbReference type="InterPro" id="IPR038467">
    <property type="entry name" value="RF3_dom_3_sf"/>
</dbReference>
<dbReference type="InterPro" id="IPR041732">
    <property type="entry name" value="RF3_GTP-bd"/>
</dbReference>
<dbReference type="InterPro" id="IPR005225">
    <property type="entry name" value="Small_GTP-bd"/>
</dbReference>
<dbReference type="InterPro" id="IPR000795">
    <property type="entry name" value="T_Tr_GTP-bd_dom"/>
</dbReference>
<dbReference type="InterPro" id="IPR009000">
    <property type="entry name" value="Transl_B-barrel_sf"/>
</dbReference>
<dbReference type="NCBIfam" id="TIGR00503">
    <property type="entry name" value="prfC"/>
    <property type="match status" value="1"/>
</dbReference>
<dbReference type="NCBIfam" id="NF001964">
    <property type="entry name" value="PRK00741.1"/>
    <property type="match status" value="1"/>
</dbReference>
<dbReference type="NCBIfam" id="TIGR00231">
    <property type="entry name" value="small_GTP"/>
    <property type="match status" value="1"/>
</dbReference>
<dbReference type="PANTHER" id="PTHR43556">
    <property type="entry name" value="PEPTIDE CHAIN RELEASE FACTOR RF3"/>
    <property type="match status" value="1"/>
</dbReference>
<dbReference type="PANTHER" id="PTHR43556:SF2">
    <property type="entry name" value="PEPTIDE CHAIN RELEASE FACTOR RF3"/>
    <property type="match status" value="1"/>
</dbReference>
<dbReference type="Pfam" id="PF22042">
    <property type="entry name" value="EF-G_D2"/>
    <property type="match status" value="1"/>
</dbReference>
<dbReference type="Pfam" id="PF00009">
    <property type="entry name" value="GTP_EFTU"/>
    <property type="match status" value="1"/>
</dbReference>
<dbReference type="Pfam" id="PF16658">
    <property type="entry name" value="RF3_C"/>
    <property type="match status" value="1"/>
</dbReference>
<dbReference type="PRINTS" id="PR00315">
    <property type="entry name" value="ELONGATNFCT"/>
</dbReference>
<dbReference type="SUPFAM" id="SSF54980">
    <property type="entry name" value="EF-G C-terminal domain-like"/>
    <property type="match status" value="1"/>
</dbReference>
<dbReference type="SUPFAM" id="SSF52540">
    <property type="entry name" value="P-loop containing nucleoside triphosphate hydrolases"/>
    <property type="match status" value="1"/>
</dbReference>
<dbReference type="SUPFAM" id="SSF50447">
    <property type="entry name" value="Translation proteins"/>
    <property type="match status" value="1"/>
</dbReference>
<dbReference type="PROSITE" id="PS00301">
    <property type="entry name" value="G_TR_1"/>
    <property type="match status" value="1"/>
</dbReference>
<dbReference type="PROSITE" id="PS51722">
    <property type="entry name" value="G_TR_2"/>
    <property type="match status" value="1"/>
</dbReference>
<protein>
    <recommendedName>
        <fullName evidence="1">Peptide chain release factor 3</fullName>
        <shortName evidence="1">RF-3</shortName>
    </recommendedName>
</protein>